<evidence type="ECO:0000255" key="1">
    <source>
        <dbReference type="HAMAP-Rule" id="MF_00101"/>
    </source>
</evidence>
<protein>
    <recommendedName>
        <fullName evidence="1">Holo-[acyl-carrier-protein] synthase</fullName>
        <shortName evidence="1">Holo-ACP synthase</shortName>
        <ecNumber evidence="1">2.7.8.7</ecNumber>
    </recommendedName>
    <alternativeName>
        <fullName evidence="1">4'-phosphopantetheinyl transferase AcpS</fullName>
    </alternativeName>
</protein>
<comment type="function">
    <text evidence="1">Transfers the 4'-phosphopantetheine moiety from coenzyme A to a Ser of acyl-carrier-protein.</text>
</comment>
<comment type="catalytic activity">
    <reaction evidence="1">
        <text>apo-[ACP] + CoA = holo-[ACP] + adenosine 3',5'-bisphosphate + H(+)</text>
        <dbReference type="Rhea" id="RHEA:12068"/>
        <dbReference type="Rhea" id="RHEA-COMP:9685"/>
        <dbReference type="Rhea" id="RHEA-COMP:9690"/>
        <dbReference type="ChEBI" id="CHEBI:15378"/>
        <dbReference type="ChEBI" id="CHEBI:29999"/>
        <dbReference type="ChEBI" id="CHEBI:57287"/>
        <dbReference type="ChEBI" id="CHEBI:58343"/>
        <dbReference type="ChEBI" id="CHEBI:64479"/>
        <dbReference type="EC" id="2.7.8.7"/>
    </reaction>
</comment>
<comment type="cofactor">
    <cofactor evidence="1">
        <name>Mg(2+)</name>
        <dbReference type="ChEBI" id="CHEBI:18420"/>
    </cofactor>
</comment>
<comment type="subcellular location">
    <subcellularLocation>
        <location evidence="1">Cytoplasm</location>
    </subcellularLocation>
</comment>
<comment type="similarity">
    <text evidence="1">Belongs to the P-Pant transferase superfamily. AcpS family.</text>
</comment>
<reference key="1">
    <citation type="journal article" date="1996" name="Nucleic Acids Res.">
        <title>Complete sequence analysis of the genome of the bacterium Mycoplasma pneumoniae.</title>
        <authorList>
            <person name="Himmelreich R."/>
            <person name="Hilbert H."/>
            <person name="Plagens H."/>
            <person name="Pirkl E."/>
            <person name="Li B.-C."/>
            <person name="Herrmann R."/>
        </authorList>
    </citation>
    <scope>NUCLEOTIDE SEQUENCE [LARGE SCALE GENOMIC DNA]</scope>
    <source>
        <strain>ATCC 29342 / M129 / Subtype 1</strain>
    </source>
</reference>
<dbReference type="EC" id="2.7.8.7" evidence="1"/>
<dbReference type="EMBL" id="U00089">
    <property type="protein sequence ID" value="AAB96186.1"/>
    <property type="molecule type" value="Genomic_DNA"/>
</dbReference>
<dbReference type="PIR" id="S73864">
    <property type="entry name" value="S73864"/>
</dbReference>
<dbReference type="RefSeq" id="NP_109986.1">
    <property type="nucleotide sequence ID" value="NC_000912.1"/>
</dbReference>
<dbReference type="RefSeq" id="WP_010874655.1">
    <property type="nucleotide sequence ID" value="NZ_OU342337.1"/>
</dbReference>
<dbReference type="SMR" id="P75480"/>
<dbReference type="IntAct" id="P75480">
    <property type="interactions" value="1"/>
</dbReference>
<dbReference type="STRING" id="272634.MPN_298"/>
<dbReference type="EnsemblBacteria" id="AAB96186">
    <property type="protein sequence ID" value="AAB96186"/>
    <property type="gene ID" value="MPN_298"/>
</dbReference>
<dbReference type="KEGG" id="mpn:MPN_298"/>
<dbReference type="PATRIC" id="fig|272634.6.peg.322"/>
<dbReference type="HOGENOM" id="CLU_089696_1_1_14"/>
<dbReference type="OrthoDB" id="389495at2"/>
<dbReference type="BioCyc" id="MPNE272634:G1GJ3-467-MONOMER"/>
<dbReference type="Proteomes" id="UP000000808">
    <property type="component" value="Chromosome"/>
</dbReference>
<dbReference type="GO" id="GO:0005737">
    <property type="term" value="C:cytoplasm"/>
    <property type="evidence" value="ECO:0007669"/>
    <property type="project" value="UniProtKB-SubCell"/>
</dbReference>
<dbReference type="GO" id="GO:0008897">
    <property type="term" value="F:holo-[acyl-carrier-protein] synthase activity"/>
    <property type="evidence" value="ECO:0007669"/>
    <property type="project" value="UniProtKB-UniRule"/>
</dbReference>
<dbReference type="GO" id="GO:0000287">
    <property type="term" value="F:magnesium ion binding"/>
    <property type="evidence" value="ECO:0007669"/>
    <property type="project" value="UniProtKB-UniRule"/>
</dbReference>
<dbReference type="GO" id="GO:0006633">
    <property type="term" value="P:fatty acid biosynthetic process"/>
    <property type="evidence" value="ECO:0007669"/>
    <property type="project" value="UniProtKB-UniRule"/>
</dbReference>
<dbReference type="Gene3D" id="3.90.470.20">
    <property type="entry name" value="4'-phosphopantetheinyl transferase domain"/>
    <property type="match status" value="1"/>
</dbReference>
<dbReference type="HAMAP" id="MF_00101">
    <property type="entry name" value="AcpS"/>
    <property type="match status" value="1"/>
</dbReference>
<dbReference type="InterPro" id="IPR008278">
    <property type="entry name" value="4-PPantetheinyl_Trfase_dom"/>
</dbReference>
<dbReference type="InterPro" id="IPR037143">
    <property type="entry name" value="4-PPantetheinyl_Trfase_dom_sf"/>
</dbReference>
<dbReference type="InterPro" id="IPR002582">
    <property type="entry name" value="ACPS"/>
</dbReference>
<dbReference type="InterPro" id="IPR004568">
    <property type="entry name" value="Ppantetheine-prot_Trfase_dom"/>
</dbReference>
<dbReference type="NCBIfam" id="TIGR00556">
    <property type="entry name" value="pantethn_trn"/>
    <property type="match status" value="1"/>
</dbReference>
<dbReference type="NCBIfam" id="NF000835">
    <property type="entry name" value="PRK00070.4-1"/>
    <property type="match status" value="1"/>
</dbReference>
<dbReference type="Pfam" id="PF01648">
    <property type="entry name" value="ACPS"/>
    <property type="match status" value="1"/>
</dbReference>
<dbReference type="SUPFAM" id="SSF56214">
    <property type="entry name" value="4'-phosphopantetheinyl transferase"/>
    <property type="match status" value="1"/>
</dbReference>
<accession>P75480</accession>
<sequence length="119" mass="13774">MILGIGIDLVEIKRFEQLARQTDNCFAKRLLTSTEYAHYAKLRKDSEKSSFLAVHWSLKEAIYKAVNHIKPLFSQLEITKKNQRYNCQIDPKIELLLSVSYSSNNITAICLAQQTPWKN</sequence>
<gene>
    <name evidence="1" type="primary">acpS</name>
    <name type="ordered locus">MPN_298</name>
    <name type="ORF">MP538</name>
</gene>
<name>ACPS_MYCPN</name>
<proteinExistence type="inferred from homology"/>
<keyword id="KW-0963">Cytoplasm</keyword>
<keyword id="KW-0275">Fatty acid biosynthesis</keyword>
<keyword id="KW-0276">Fatty acid metabolism</keyword>
<keyword id="KW-0444">Lipid biosynthesis</keyword>
<keyword id="KW-0443">Lipid metabolism</keyword>
<keyword id="KW-0460">Magnesium</keyword>
<keyword id="KW-0479">Metal-binding</keyword>
<keyword id="KW-1185">Reference proteome</keyword>
<keyword id="KW-0808">Transferase</keyword>
<organism>
    <name type="scientific">Mycoplasma pneumoniae (strain ATCC 29342 / M129 / Subtype 1)</name>
    <name type="common">Mycoplasmoides pneumoniae</name>
    <dbReference type="NCBI Taxonomy" id="272634"/>
    <lineage>
        <taxon>Bacteria</taxon>
        <taxon>Bacillati</taxon>
        <taxon>Mycoplasmatota</taxon>
        <taxon>Mycoplasmoidales</taxon>
        <taxon>Mycoplasmoidaceae</taxon>
        <taxon>Mycoplasmoides</taxon>
    </lineage>
</organism>
<feature type="chain" id="PRO_0000175673" description="Holo-[acyl-carrier-protein] synthase">
    <location>
        <begin position="1"/>
        <end position="119"/>
    </location>
</feature>
<feature type="binding site" evidence="1">
    <location>
        <position position="8"/>
    </location>
    <ligand>
        <name>Mg(2+)</name>
        <dbReference type="ChEBI" id="CHEBI:18420"/>
    </ligand>
</feature>
<feature type="binding site" evidence="1">
    <location>
        <position position="60"/>
    </location>
    <ligand>
        <name>Mg(2+)</name>
        <dbReference type="ChEBI" id="CHEBI:18420"/>
    </ligand>
</feature>